<accession>Q65QD9</accession>
<reference key="1">
    <citation type="journal article" date="2004" name="Nat. Biotechnol.">
        <title>The genome sequence of the capnophilic rumen bacterium Mannheimia succiniciproducens.</title>
        <authorList>
            <person name="Hong S.H."/>
            <person name="Kim J.S."/>
            <person name="Lee S.Y."/>
            <person name="In Y.H."/>
            <person name="Choi S.S."/>
            <person name="Rih J.-K."/>
            <person name="Kim C.H."/>
            <person name="Jeong H."/>
            <person name="Hur C.G."/>
            <person name="Kim J.J."/>
        </authorList>
    </citation>
    <scope>NUCLEOTIDE SEQUENCE [LARGE SCALE GENOMIC DNA]</scope>
    <source>
        <strain>KCTC 0769BP / MBEL55E</strain>
    </source>
</reference>
<keyword id="KW-0143">Chaperone</keyword>
<keyword id="KW-0963">Cytoplasm</keyword>
<keyword id="KW-0653">Protein transport</keyword>
<keyword id="KW-0811">Translocation</keyword>
<keyword id="KW-0813">Transport</keyword>
<organism>
    <name type="scientific">Mannheimia succiniciproducens (strain KCTC 0769BP / MBEL55E)</name>
    <dbReference type="NCBI Taxonomy" id="221988"/>
    <lineage>
        <taxon>Bacteria</taxon>
        <taxon>Pseudomonadati</taxon>
        <taxon>Pseudomonadota</taxon>
        <taxon>Gammaproteobacteria</taxon>
        <taxon>Pasteurellales</taxon>
        <taxon>Pasteurellaceae</taxon>
        <taxon>Basfia</taxon>
    </lineage>
</organism>
<dbReference type="EMBL" id="AE016827">
    <property type="protein sequence ID" value="AAU38821.1"/>
    <property type="molecule type" value="Genomic_DNA"/>
</dbReference>
<dbReference type="RefSeq" id="WP_011201365.1">
    <property type="nucleotide sequence ID" value="NC_006300.1"/>
</dbReference>
<dbReference type="SMR" id="Q65QD9"/>
<dbReference type="STRING" id="221988.MS2214"/>
<dbReference type="KEGG" id="msu:MS2214"/>
<dbReference type="eggNOG" id="COG1952">
    <property type="taxonomic scope" value="Bacteria"/>
</dbReference>
<dbReference type="HOGENOM" id="CLU_111574_1_0_6"/>
<dbReference type="OrthoDB" id="9795145at2"/>
<dbReference type="Proteomes" id="UP000000607">
    <property type="component" value="Chromosome"/>
</dbReference>
<dbReference type="GO" id="GO:0005737">
    <property type="term" value="C:cytoplasm"/>
    <property type="evidence" value="ECO:0007669"/>
    <property type="project" value="UniProtKB-SubCell"/>
</dbReference>
<dbReference type="GO" id="GO:0051082">
    <property type="term" value="F:unfolded protein binding"/>
    <property type="evidence" value="ECO:0007669"/>
    <property type="project" value="InterPro"/>
</dbReference>
<dbReference type="GO" id="GO:0006457">
    <property type="term" value="P:protein folding"/>
    <property type="evidence" value="ECO:0007669"/>
    <property type="project" value="UniProtKB-UniRule"/>
</dbReference>
<dbReference type="GO" id="GO:0051262">
    <property type="term" value="P:protein tetramerization"/>
    <property type="evidence" value="ECO:0007669"/>
    <property type="project" value="InterPro"/>
</dbReference>
<dbReference type="GO" id="GO:0015031">
    <property type="term" value="P:protein transport"/>
    <property type="evidence" value="ECO:0007669"/>
    <property type="project" value="UniProtKB-UniRule"/>
</dbReference>
<dbReference type="CDD" id="cd00557">
    <property type="entry name" value="Translocase_SecB"/>
    <property type="match status" value="1"/>
</dbReference>
<dbReference type="Gene3D" id="3.10.420.10">
    <property type="entry name" value="SecB-like"/>
    <property type="match status" value="1"/>
</dbReference>
<dbReference type="HAMAP" id="MF_00821">
    <property type="entry name" value="SecB"/>
    <property type="match status" value="1"/>
</dbReference>
<dbReference type="InterPro" id="IPR003708">
    <property type="entry name" value="SecB"/>
</dbReference>
<dbReference type="InterPro" id="IPR035958">
    <property type="entry name" value="SecB-like_sf"/>
</dbReference>
<dbReference type="NCBIfam" id="NF004393">
    <property type="entry name" value="PRK05751.1-4"/>
    <property type="match status" value="1"/>
</dbReference>
<dbReference type="NCBIfam" id="TIGR00809">
    <property type="entry name" value="secB"/>
    <property type="match status" value="1"/>
</dbReference>
<dbReference type="PANTHER" id="PTHR36918">
    <property type="match status" value="1"/>
</dbReference>
<dbReference type="PANTHER" id="PTHR36918:SF1">
    <property type="entry name" value="PROTEIN-EXPORT PROTEIN SECB"/>
    <property type="match status" value="1"/>
</dbReference>
<dbReference type="Pfam" id="PF02556">
    <property type="entry name" value="SecB"/>
    <property type="match status" value="1"/>
</dbReference>
<dbReference type="PRINTS" id="PR01594">
    <property type="entry name" value="SECBCHAPRONE"/>
</dbReference>
<dbReference type="SUPFAM" id="SSF54611">
    <property type="entry name" value="SecB-like"/>
    <property type="match status" value="1"/>
</dbReference>
<comment type="function">
    <text evidence="1">One of the proteins required for the normal export of preproteins out of the cell cytoplasm. It is a molecular chaperone that binds to a subset of precursor proteins, maintaining them in a translocation-competent state. It also specifically binds to its receptor SecA.</text>
</comment>
<comment type="subunit">
    <text evidence="1">Homotetramer, a dimer of dimers. One homotetramer interacts with 1 SecA dimer.</text>
</comment>
<comment type="subcellular location">
    <subcellularLocation>
        <location evidence="1">Cytoplasm</location>
    </subcellularLocation>
</comment>
<comment type="similarity">
    <text evidence="1">Belongs to the SecB family.</text>
</comment>
<name>SECB_MANSM</name>
<gene>
    <name evidence="1" type="primary">secB</name>
    <name type="ordered locus">MS2214</name>
</gene>
<protein>
    <recommendedName>
        <fullName evidence="1">Protein-export protein SecB</fullName>
    </recommendedName>
</protein>
<evidence type="ECO:0000255" key="1">
    <source>
        <dbReference type="HAMAP-Rule" id="MF_00821"/>
    </source>
</evidence>
<feature type="chain" id="PRO_0000055384" description="Protein-export protein SecB">
    <location>
        <begin position="1"/>
        <end position="169"/>
    </location>
</feature>
<sequence length="169" mass="19118">MAEENQTPATATEEQQAVLQIQRIYVKDISFEAPNLPHVFQQEWKPKLNFDLSTEAKQLGEDLYEVVLNISVETTLEDSGDLAFLCEVKQAGVFTISGLEDMQMAHCLTSQCPNMLFPYARELVSNLVNRGTFPALNLSPVNFDALFMEFLQRQEQESQNAESSTEVQH</sequence>
<proteinExistence type="inferred from homology"/>